<accession>A1W1D0</accession>
<comment type="function">
    <text evidence="1">Catalyzes the stereoinversion of LL-2,6-diaminopimelate (L,L-DAP) to meso-diaminopimelate (meso-DAP), a precursor of L-lysine and an essential component of the bacterial peptidoglycan.</text>
</comment>
<comment type="catalytic activity">
    <reaction evidence="1">
        <text>(2S,6S)-2,6-diaminopimelate = meso-2,6-diaminopimelate</text>
        <dbReference type="Rhea" id="RHEA:15393"/>
        <dbReference type="ChEBI" id="CHEBI:57609"/>
        <dbReference type="ChEBI" id="CHEBI:57791"/>
        <dbReference type="EC" id="5.1.1.7"/>
    </reaction>
</comment>
<comment type="pathway">
    <text evidence="1">Amino-acid biosynthesis; L-lysine biosynthesis via DAP pathway; DL-2,6-diaminopimelate from LL-2,6-diaminopimelate: step 1/1.</text>
</comment>
<comment type="subunit">
    <text evidence="1">Homodimer.</text>
</comment>
<comment type="subcellular location">
    <subcellularLocation>
        <location evidence="1">Cytoplasm</location>
    </subcellularLocation>
</comment>
<comment type="similarity">
    <text evidence="1">Belongs to the diaminopimelate epimerase family.</text>
</comment>
<feature type="chain" id="PRO_1000011865" description="Diaminopimelate epimerase">
    <location>
        <begin position="1"/>
        <end position="249"/>
    </location>
</feature>
<feature type="active site" description="Proton donor" evidence="1">
    <location>
        <position position="69"/>
    </location>
</feature>
<feature type="active site" description="Proton acceptor" evidence="1">
    <location>
        <position position="192"/>
    </location>
</feature>
<feature type="binding site" evidence="1">
    <location>
        <position position="11"/>
    </location>
    <ligand>
        <name>substrate</name>
    </ligand>
</feature>
<feature type="binding site" evidence="1">
    <location>
        <position position="60"/>
    </location>
    <ligand>
        <name>substrate</name>
    </ligand>
</feature>
<feature type="binding site" evidence="1">
    <location>
        <begin position="70"/>
        <end position="71"/>
    </location>
    <ligand>
        <name>substrate</name>
    </ligand>
</feature>
<feature type="binding site" evidence="1">
    <location>
        <position position="164"/>
    </location>
    <ligand>
        <name>substrate</name>
    </ligand>
</feature>
<feature type="binding site" evidence="1">
    <location>
        <begin position="182"/>
        <end position="183"/>
    </location>
    <ligand>
        <name>substrate</name>
    </ligand>
</feature>
<feature type="binding site" evidence="1">
    <location>
        <begin position="193"/>
        <end position="194"/>
    </location>
    <ligand>
        <name>substrate</name>
    </ligand>
</feature>
<feature type="site" description="Could be important to modulate the pK values of the two catalytic cysteine residues" evidence="1">
    <location>
        <position position="138"/>
    </location>
</feature>
<feature type="site" description="Could be important to modulate the pK values of the two catalytic cysteine residues" evidence="1">
    <location>
        <position position="182"/>
    </location>
</feature>
<reference key="1">
    <citation type="submission" date="2006-12" db="EMBL/GenBank/DDBJ databases">
        <authorList>
            <person name="Fouts D.E."/>
            <person name="Nelson K.E."/>
            <person name="Sebastian Y."/>
        </authorList>
    </citation>
    <scope>NUCLEOTIDE SEQUENCE [LARGE SCALE GENOMIC DNA]</scope>
    <source>
        <strain>81-176</strain>
    </source>
</reference>
<organism>
    <name type="scientific">Campylobacter jejuni subsp. jejuni serotype O:23/36 (strain 81-176)</name>
    <dbReference type="NCBI Taxonomy" id="354242"/>
    <lineage>
        <taxon>Bacteria</taxon>
        <taxon>Pseudomonadati</taxon>
        <taxon>Campylobacterota</taxon>
        <taxon>Epsilonproteobacteria</taxon>
        <taxon>Campylobacterales</taxon>
        <taxon>Campylobacteraceae</taxon>
        <taxon>Campylobacter</taxon>
    </lineage>
</organism>
<evidence type="ECO:0000255" key="1">
    <source>
        <dbReference type="HAMAP-Rule" id="MF_00197"/>
    </source>
</evidence>
<keyword id="KW-0028">Amino-acid biosynthesis</keyword>
<keyword id="KW-0963">Cytoplasm</keyword>
<keyword id="KW-0413">Isomerase</keyword>
<keyword id="KW-0457">Lysine biosynthesis</keyword>
<sequence length="249" mass="28336">MKFYKYCASGNDFVITNADRKEDRSALAKELCNRYEGIGADGFIVILPHEKYDFEWEFYNNDGSRAAMCGNGSRAAAHFAHHINKINPNMSFLTGAGVIKAKVNQDKVEVSLGKIKSVQNTFEELGKTWQLCNTGVPHLVHFCQNLDEFDTMLCQKMRQKYNANVNFVKILDENHLKVRTYERGVEDETLACGTGMGACFYLAFLNKKVQNKVKITPKSGEEVGFAYKNEELFFEGKVKYCFEANYNFS</sequence>
<dbReference type="EC" id="5.1.1.7" evidence="1"/>
<dbReference type="EMBL" id="CP000538">
    <property type="protein sequence ID" value="EAQ72694.1"/>
    <property type="molecule type" value="Genomic_DNA"/>
</dbReference>
<dbReference type="RefSeq" id="WP_002855997.1">
    <property type="nucleotide sequence ID" value="NC_008787.1"/>
</dbReference>
<dbReference type="SMR" id="A1W1D0"/>
<dbReference type="KEGG" id="cjj:CJJ81176_1516"/>
<dbReference type="eggNOG" id="COG0253">
    <property type="taxonomic scope" value="Bacteria"/>
</dbReference>
<dbReference type="HOGENOM" id="CLU_053306_3_2_7"/>
<dbReference type="UniPathway" id="UPA00034">
    <property type="reaction ID" value="UER00025"/>
</dbReference>
<dbReference type="Proteomes" id="UP000000646">
    <property type="component" value="Chromosome"/>
</dbReference>
<dbReference type="GO" id="GO:0005829">
    <property type="term" value="C:cytosol"/>
    <property type="evidence" value="ECO:0007669"/>
    <property type="project" value="TreeGrafter"/>
</dbReference>
<dbReference type="GO" id="GO:0008837">
    <property type="term" value="F:diaminopimelate epimerase activity"/>
    <property type="evidence" value="ECO:0007669"/>
    <property type="project" value="UniProtKB-UniRule"/>
</dbReference>
<dbReference type="GO" id="GO:0009089">
    <property type="term" value="P:lysine biosynthetic process via diaminopimelate"/>
    <property type="evidence" value="ECO:0007669"/>
    <property type="project" value="UniProtKB-UniRule"/>
</dbReference>
<dbReference type="Gene3D" id="3.10.310.10">
    <property type="entry name" value="Diaminopimelate Epimerase, Chain A, domain 1"/>
    <property type="match status" value="2"/>
</dbReference>
<dbReference type="HAMAP" id="MF_00197">
    <property type="entry name" value="DAP_epimerase"/>
    <property type="match status" value="1"/>
</dbReference>
<dbReference type="InterPro" id="IPR018510">
    <property type="entry name" value="DAP_epimerase_AS"/>
</dbReference>
<dbReference type="InterPro" id="IPR001653">
    <property type="entry name" value="DAP_epimerase_DapF"/>
</dbReference>
<dbReference type="NCBIfam" id="TIGR00652">
    <property type="entry name" value="DapF"/>
    <property type="match status" value="1"/>
</dbReference>
<dbReference type="PANTHER" id="PTHR31689:SF0">
    <property type="entry name" value="DIAMINOPIMELATE EPIMERASE"/>
    <property type="match status" value="1"/>
</dbReference>
<dbReference type="PANTHER" id="PTHR31689">
    <property type="entry name" value="DIAMINOPIMELATE EPIMERASE, CHLOROPLASTIC"/>
    <property type="match status" value="1"/>
</dbReference>
<dbReference type="Pfam" id="PF01678">
    <property type="entry name" value="DAP_epimerase"/>
    <property type="match status" value="2"/>
</dbReference>
<dbReference type="SUPFAM" id="SSF54506">
    <property type="entry name" value="Diaminopimelate epimerase-like"/>
    <property type="match status" value="2"/>
</dbReference>
<dbReference type="PROSITE" id="PS01326">
    <property type="entry name" value="DAP_EPIMERASE"/>
    <property type="match status" value="1"/>
</dbReference>
<gene>
    <name evidence="1" type="primary">dapF</name>
    <name type="ordered locus">CJJ81176_1516</name>
</gene>
<protein>
    <recommendedName>
        <fullName evidence="1">Diaminopimelate epimerase</fullName>
        <shortName evidence="1">DAP epimerase</shortName>
        <ecNumber evidence="1">5.1.1.7</ecNumber>
    </recommendedName>
    <alternativeName>
        <fullName evidence="1">PLP-independent amino acid racemase</fullName>
    </alternativeName>
</protein>
<proteinExistence type="inferred from homology"/>
<name>DAPF_CAMJJ</name>